<organism>
    <name type="scientific">Homo sapiens</name>
    <name type="common">Human</name>
    <dbReference type="NCBI Taxonomy" id="9606"/>
    <lineage>
        <taxon>Eukaryota</taxon>
        <taxon>Metazoa</taxon>
        <taxon>Chordata</taxon>
        <taxon>Craniata</taxon>
        <taxon>Vertebrata</taxon>
        <taxon>Euteleostomi</taxon>
        <taxon>Mammalia</taxon>
        <taxon>Eutheria</taxon>
        <taxon>Euarchontoglires</taxon>
        <taxon>Primates</taxon>
        <taxon>Haplorrhini</taxon>
        <taxon>Catarrhini</taxon>
        <taxon>Hominidae</taxon>
        <taxon>Homo</taxon>
    </lineage>
</organism>
<gene>
    <name evidence="5 10" type="primary">IGKV1-17</name>
</gene>
<reference key="1">
    <citation type="journal article" date="2005" name="Nature">
        <title>Generation and annotation of the DNA sequences of human chromosomes 2 and 4.</title>
        <authorList>
            <person name="Hillier L.W."/>
            <person name="Graves T.A."/>
            <person name="Fulton R.S."/>
            <person name="Fulton L.A."/>
            <person name="Pepin K.H."/>
            <person name="Minx P."/>
            <person name="Wagner-McPherson C."/>
            <person name="Layman D."/>
            <person name="Wylie K."/>
            <person name="Sekhon M."/>
            <person name="Becker M.C."/>
            <person name="Fewell G.A."/>
            <person name="Delehaunty K.D."/>
            <person name="Miner T.L."/>
            <person name="Nash W.E."/>
            <person name="Kremitzki C."/>
            <person name="Oddy L."/>
            <person name="Du H."/>
            <person name="Sun H."/>
            <person name="Bradshaw-Cordum H."/>
            <person name="Ali J."/>
            <person name="Carter J."/>
            <person name="Cordes M."/>
            <person name="Harris A."/>
            <person name="Isak A."/>
            <person name="van Brunt A."/>
            <person name="Nguyen C."/>
            <person name="Du F."/>
            <person name="Courtney L."/>
            <person name="Kalicki J."/>
            <person name="Ozersky P."/>
            <person name="Abbott S."/>
            <person name="Armstrong J."/>
            <person name="Belter E.A."/>
            <person name="Caruso L."/>
            <person name="Cedroni M."/>
            <person name="Cotton M."/>
            <person name="Davidson T."/>
            <person name="Desai A."/>
            <person name="Elliott G."/>
            <person name="Erb T."/>
            <person name="Fronick C."/>
            <person name="Gaige T."/>
            <person name="Haakenson W."/>
            <person name="Haglund K."/>
            <person name="Holmes A."/>
            <person name="Harkins R."/>
            <person name="Kim K."/>
            <person name="Kruchowski S.S."/>
            <person name="Strong C.M."/>
            <person name="Grewal N."/>
            <person name="Goyea E."/>
            <person name="Hou S."/>
            <person name="Levy A."/>
            <person name="Martinka S."/>
            <person name="Mead K."/>
            <person name="McLellan M.D."/>
            <person name="Meyer R."/>
            <person name="Randall-Maher J."/>
            <person name="Tomlinson C."/>
            <person name="Dauphin-Kohlberg S."/>
            <person name="Kozlowicz-Reilly A."/>
            <person name="Shah N."/>
            <person name="Swearengen-Shahid S."/>
            <person name="Snider J."/>
            <person name="Strong J.T."/>
            <person name="Thompson J."/>
            <person name="Yoakum M."/>
            <person name="Leonard S."/>
            <person name="Pearman C."/>
            <person name="Trani L."/>
            <person name="Radionenko M."/>
            <person name="Waligorski J.E."/>
            <person name="Wang C."/>
            <person name="Rock S.M."/>
            <person name="Tin-Wollam A.-M."/>
            <person name="Maupin R."/>
            <person name="Latreille P."/>
            <person name="Wendl M.C."/>
            <person name="Yang S.-P."/>
            <person name="Pohl C."/>
            <person name="Wallis J.W."/>
            <person name="Spieth J."/>
            <person name="Bieri T.A."/>
            <person name="Berkowicz N."/>
            <person name="Nelson J.O."/>
            <person name="Osborne J."/>
            <person name="Ding L."/>
            <person name="Meyer R."/>
            <person name="Sabo A."/>
            <person name="Shotland Y."/>
            <person name="Sinha P."/>
            <person name="Wohldmann P.E."/>
            <person name="Cook L.L."/>
            <person name="Hickenbotham M.T."/>
            <person name="Eldred J."/>
            <person name="Williams D."/>
            <person name="Jones T.A."/>
            <person name="She X."/>
            <person name="Ciccarelli F.D."/>
            <person name="Izaurralde E."/>
            <person name="Taylor J."/>
            <person name="Schmutz J."/>
            <person name="Myers R.M."/>
            <person name="Cox D.R."/>
            <person name="Huang X."/>
            <person name="McPherson J.D."/>
            <person name="Mardis E.R."/>
            <person name="Clifton S.W."/>
            <person name="Warren W.C."/>
            <person name="Chinwalla A.T."/>
            <person name="Eddy S.R."/>
            <person name="Marra M.A."/>
            <person name="Ovcharenko I."/>
            <person name="Furey T.S."/>
            <person name="Miller W."/>
            <person name="Eichler E.E."/>
            <person name="Bork P."/>
            <person name="Suyama M."/>
            <person name="Torrents D."/>
            <person name="Waterston R.H."/>
            <person name="Wilson R.K."/>
        </authorList>
    </citation>
    <scope>NUCLEOTIDE SEQUENCE [LARGE SCALE GENOMIC DNA] (IMGT ALLELE IGKV1-17*01)</scope>
</reference>
<reference key="2">
    <citation type="journal article" date="1973" name="Hoppe-Seyler's Z. Physiol. Chem.">
        <title>The primary structure of a monoclonal IgM-immunoglobulin (macroglobulin Gal.), I. The amino acid sequence of the L-chain of kappa-type, subgroup I.</title>
        <authorList>
            <person name="Laure C.J."/>
            <person name="Watanabe S."/>
            <person name="Hilschmann N."/>
        </authorList>
    </citation>
    <scope>PROTEIN SEQUENCE OF 23-117</scope>
</reference>
<reference key="3">
    <citation type="journal article" date="1983" name="Proc. Natl. Acad. Sci. U.S.A.">
        <title>Amino acid sequence of the Fv region of a human monoclonal IgM (protein WEA) with antibody activity against 3,4-pyruvylated galactose in Klebsiella polysaccharides K30 and K33.</title>
        <authorList>
            <person name="Goni F."/>
            <person name="Frangione B."/>
        </authorList>
    </citation>
    <scope>PROTEIN SEQUENCE OF 23-117</scope>
</reference>
<reference key="4">
    <citation type="journal article" date="2001" name="Exp. Clin. Immunogenet.">
        <title>Nomenclature of the human immunoglobulin kappa (IGK) genes.</title>
        <authorList>
            <person name="Lefranc M.P."/>
        </authorList>
    </citation>
    <scope>NOMEMCLATURE</scope>
</reference>
<reference key="5">
    <citation type="book" date="2001" name="The Immunoglobulin FactsBook.">
        <title>The Immunoglobulin FactsBook.</title>
        <editorList>
            <person name="Lefranc M.P."/>
            <person name="Lefranc G."/>
        </editorList>
        <authorList>
            <person name="Lefranc M.P."/>
            <person name="Lefranc G."/>
        </authorList>
    </citation>
    <scope>NOMENCLATURE</scope>
</reference>
<reference key="6">
    <citation type="journal article" date="2007" name="Annu. Rev. Genet.">
        <title>Immunoglobulin somatic hypermutation.</title>
        <authorList>
            <person name="Teng G."/>
            <person name="Papavasiliou F.N."/>
        </authorList>
    </citation>
    <scope>REVIEW ON SOMATIC HYPERMUTATION</scope>
</reference>
<reference key="7">
    <citation type="journal article" date="2010" name="J. Allergy Clin. Immunol.">
        <title>Structure and function of immunoglobulins.</title>
        <authorList>
            <person name="Schroeder H.W. Jr."/>
            <person name="Cavacini L."/>
        </authorList>
    </citation>
    <scope>REVIEW ON IMMUNOGLOBULINS</scope>
</reference>
<reference key="8">
    <citation type="journal article" date="2012" name="Nat. Rev. Immunol.">
        <title>Molecular programming of B cell memory.</title>
        <authorList>
            <person name="McHeyzer-Williams M."/>
            <person name="Okitsu S."/>
            <person name="Wang N."/>
            <person name="McHeyzer-Williams L."/>
        </authorList>
    </citation>
    <scope>REVIEW ON FUNCTION</scope>
</reference>
<reference key="9">
    <citation type="journal article" date="2014" name="Front. Immunol.">
        <title>Immunoglobulin and T Cell Receptor Genes: IMGT((R)) and the Birth and Rise of Immunoinformatics.</title>
        <authorList>
            <person name="Lefranc M.P."/>
        </authorList>
    </citation>
    <scope>NOMENCLATURE</scope>
</reference>
<name>KV117_HUMAN</name>
<keyword id="KW-1064">Adaptive immunity</keyword>
<keyword id="KW-1003">Cell membrane</keyword>
<keyword id="KW-0903">Direct protein sequencing</keyword>
<keyword id="KW-1015">Disulfide bond</keyword>
<keyword id="KW-0391">Immunity</keyword>
<keyword id="KW-1280">Immunoglobulin</keyword>
<keyword id="KW-0393">Immunoglobulin domain</keyword>
<keyword id="KW-0472">Membrane</keyword>
<keyword id="KW-1267">Proteomics identification</keyword>
<keyword id="KW-1185">Reference proteome</keyword>
<keyword id="KW-0964">Secreted</keyword>
<keyword id="KW-0732">Signal</keyword>
<feature type="signal peptide" evidence="3 4">
    <location>
        <begin position="1"/>
        <end position="22"/>
    </location>
</feature>
<feature type="chain" id="PRO_0000059743" description="Immunoglobulin kappa variable 1-17" evidence="3 4">
    <location>
        <begin position="23"/>
        <end position="117"/>
    </location>
</feature>
<feature type="domain" description="Ig-like" evidence="2">
    <location>
        <begin position="24"/>
        <end position="117" status="greater than"/>
    </location>
</feature>
<feature type="region of interest" description="Framework-1" evidence="1">
    <location>
        <begin position="23"/>
        <end position="45"/>
    </location>
</feature>
<feature type="region of interest" description="Complementarity-determining-1" evidence="1">
    <location>
        <begin position="46"/>
        <end position="56"/>
    </location>
</feature>
<feature type="region of interest" description="Framework-2" evidence="1">
    <location>
        <begin position="57"/>
        <end position="71"/>
    </location>
</feature>
<feature type="region of interest" description="Complementarity-determining-2" evidence="1">
    <location>
        <begin position="72"/>
        <end position="78"/>
    </location>
</feature>
<feature type="region of interest" description="Framework-3" evidence="1">
    <location>
        <begin position="79"/>
        <end position="110"/>
    </location>
</feature>
<feature type="region of interest" description="Complementarity-determining-3" evidence="1">
    <location>
        <begin position="111"/>
        <end position="117" status="greater than"/>
    </location>
</feature>
<feature type="disulfide bond" evidence="2">
    <location>
        <begin position="45"/>
        <end position="110"/>
    </location>
</feature>
<feature type="sequence conflict" description="In Ref. 2; AA sequence." evidence="11" ref="2">
    <original>T</original>
    <variation>I</variation>
    <location>
        <position position="44"/>
    </location>
</feature>
<feature type="sequence conflict" description="In Ref. 2; AA sequence and 3; AA sequence." evidence="11" ref="2 3">
    <original>G</original>
    <variation>T</variation>
    <location>
        <position position="56"/>
    </location>
</feature>
<feature type="sequence conflict" description="In Ref. 3; AA sequence." evidence="11" ref="3">
    <original>K</original>
    <variation>T</variation>
    <location>
        <position position="64"/>
    </location>
</feature>
<feature type="sequence conflict" description="In Ref. 2; AA sequence." evidence="11" ref="2">
    <original>R</original>
    <variation>E</variation>
    <location>
        <position position="68"/>
    </location>
</feature>
<feature type="sequence conflict" description="In Ref. 3; AA sequence." evidence="11" ref="3">
    <original>AAS</original>
    <variation>GAT</variation>
    <location>
        <begin position="72"/>
        <end position="74"/>
    </location>
</feature>
<feature type="sequence conflict" description="In Ref. 2; AA sequence." evidence="11" ref="2">
    <original>S</original>
    <variation>N</variation>
    <location>
        <position position="75"/>
    </location>
</feature>
<feature type="sequence conflict" description="In Ref. 2; AA sequence." evidence="11" ref="2">
    <original>S</original>
    <variation>A</variation>
    <location>
        <position position="89"/>
    </location>
</feature>
<feature type="sequence conflict" description="In Ref. 3; AA sequence." evidence="11" ref="3">
    <original>S</original>
    <variation>N</variation>
    <location>
        <position position="98"/>
    </location>
</feature>
<feature type="sequence conflict" description="In Ref. 3; AA sequence." evidence="11" ref="3">
    <original>HNSY</original>
    <variation>YSSF</variation>
    <location>
        <begin position="113"/>
        <end position="116"/>
    </location>
</feature>
<feature type="sequence conflict" description="In Ref. 2; AA sequence." evidence="11" ref="2">
    <original>H</original>
    <variation>Q</variation>
    <location>
        <position position="113"/>
    </location>
</feature>
<feature type="non-terminal residue">
    <location>
        <position position="117"/>
    </location>
</feature>
<accession>P01599</accession>
<accession>A0A0B4J1Z4</accession>
<accession>P01610</accession>
<protein>
    <recommendedName>
        <fullName evidence="5 10">Immunoglobulin kappa variable 1-17</fullName>
    </recommendedName>
    <alternativeName>
        <fullName evidence="12">Ig kappa chain V-I region Gal</fullName>
    </alternativeName>
    <alternativeName>
        <fullName evidence="13">Ig kappa chain V-I region WEA</fullName>
    </alternativeName>
</protein>
<sequence length="117" mass="12779">MDMRVPAQLLGLLLLWFPGARCDIQMTQSPSSLSASVGDRVTITCRASQGIRNDLGWYQQKPGKAPKRLIYAASSLQSGVPSRFSGSGSGTEFTLTISSLQPEDFATYYCLQHNSYP</sequence>
<dbReference type="EMBL" id="AC245015">
    <property type="status" value="NOT_ANNOTATED_CDS"/>
    <property type="molecule type" value="Genomic_DNA"/>
</dbReference>
<dbReference type="PIR" id="A01867">
    <property type="entry name" value="K1HUGL"/>
</dbReference>
<dbReference type="PIR" id="A01876">
    <property type="entry name" value="K1HUWE"/>
</dbReference>
<dbReference type="EMDB" id="EMD-32784"/>
<dbReference type="EMDB" id="EMD-32785"/>
<dbReference type="SMR" id="P01599"/>
<dbReference type="FunCoup" id="P01599">
    <property type="interactions" value="376"/>
</dbReference>
<dbReference type="IntAct" id="P01599">
    <property type="interactions" value="1"/>
</dbReference>
<dbReference type="DrugBank" id="DB01593">
    <property type="generic name" value="Zinc"/>
</dbReference>
<dbReference type="DrugBank" id="DB14487">
    <property type="generic name" value="Zinc acetate"/>
</dbReference>
<dbReference type="IMGT_GENE-DB" id="IGKV1-17"/>
<dbReference type="GlyGen" id="P01599">
    <property type="glycosylation" value="1 site, 1 O-linked glycan (1 site)"/>
</dbReference>
<dbReference type="BioMuta" id="IGKV1-17"/>
<dbReference type="DMDM" id="125763"/>
<dbReference type="jPOST" id="P01599"/>
<dbReference type="MassIVE" id="P01599"/>
<dbReference type="Ensembl" id="ENST00000490686.1">
    <property type="protein sequence ID" value="ENSP00000418357.1"/>
    <property type="gene ID" value="ENSG00000240382.3"/>
</dbReference>
<dbReference type="Ensembl" id="ENST00000632229.1">
    <property type="protein sequence ID" value="ENSP00000488092.1"/>
    <property type="gene ID" value="ENSG00000281978.1"/>
</dbReference>
<dbReference type="AGR" id="HGNC:5733"/>
<dbReference type="GeneCards" id="IGKV1-17"/>
<dbReference type="HGNC" id="HGNC:5733">
    <property type="gene designation" value="IGKV1-17"/>
</dbReference>
<dbReference type="HPA" id="ENSG00000240382">
    <property type="expression patterns" value="Tissue enhanced (intestine, lymphoid tissue)"/>
</dbReference>
<dbReference type="neXtProt" id="NX_P01599"/>
<dbReference type="OpenTargets" id="ENSG00000240382"/>
<dbReference type="VEuPathDB" id="HostDB:ENSG00000240382"/>
<dbReference type="GeneTree" id="ENSGT00940000153048"/>
<dbReference type="InParanoid" id="P01599"/>
<dbReference type="OMA" id="ASQSIYY"/>
<dbReference type="PAN-GO" id="P01599">
    <property type="GO annotations" value="3 GO annotations based on evolutionary models"/>
</dbReference>
<dbReference type="PhylomeDB" id="P01599"/>
<dbReference type="PathwayCommons" id="P01599"/>
<dbReference type="Reactome" id="R-HSA-166663">
    <property type="pathway name" value="Initial triggering of complement"/>
</dbReference>
<dbReference type="Reactome" id="R-HSA-173623">
    <property type="pathway name" value="Classical antibody-mediated complement activation"/>
</dbReference>
<dbReference type="Reactome" id="R-HSA-198933">
    <property type="pathway name" value="Immunoregulatory interactions between a Lymphoid and a non-Lymphoid cell"/>
</dbReference>
<dbReference type="Reactome" id="R-HSA-202733">
    <property type="pathway name" value="Cell surface interactions at the vascular wall"/>
</dbReference>
<dbReference type="Reactome" id="R-HSA-2029481">
    <property type="pathway name" value="FCGR activation"/>
</dbReference>
<dbReference type="Reactome" id="R-HSA-2029482">
    <property type="pathway name" value="Regulation of actin dynamics for phagocytic cup formation"/>
</dbReference>
<dbReference type="Reactome" id="R-HSA-2029485">
    <property type="pathway name" value="Role of phospholipids in phagocytosis"/>
</dbReference>
<dbReference type="Reactome" id="R-HSA-2168880">
    <property type="pathway name" value="Scavenging of heme from plasma"/>
</dbReference>
<dbReference type="Reactome" id="R-HSA-2454202">
    <property type="pathway name" value="Fc epsilon receptor (FCERI) signaling"/>
</dbReference>
<dbReference type="Reactome" id="R-HSA-2730905">
    <property type="pathway name" value="Role of LAT2/NTAL/LAB on calcium mobilization"/>
</dbReference>
<dbReference type="Reactome" id="R-HSA-2871796">
    <property type="pathway name" value="FCERI mediated MAPK activation"/>
</dbReference>
<dbReference type="Reactome" id="R-HSA-2871809">
    <property type="pathway name" value="FCERI mediated Ca+2 mobilization"/>
</dbReference>
<dbReference type="Reactome" id="R-HSA-2871837">
    <property type="pathway name" value="FCERI mediated NF-kB activation"/>
</dbReference>
<dbReference type="Reactome" id="R-HSA-5690714">
    <property type="pathway name" value="CD22 mediated BCR regulation"/>
</dbReference>
<dbReference type="Reactome" id="R-HSA-9664323">
    <property type="pathway name" value="FCGR3A-mediated IL10 synthesis"/>
</dbReference>
<dbReference type="Reactome" id="R-HSA-9664422">
    <property type="pathway name" value="FCGR3A-mediated phagocytosis"/>
</dbReference>
<dbReference type="Reactome" id="R-HSA-9679191">
    <property type="pathway name" value="Potential therapeutics for SARS"/>
</dbReference>
<dbReference type="Reactome" id="R-HSA-977606">
    <property type="pathway name" value="Regulation of Complement cascade"/>
</dbReference>
<dbReference type="Reactome" id="R-HSA-983695">
    <property type="pathway name" value="Antigen activates B Cell Receptor (BCR) leading to generation of second messengers"/>
</dbReference>
<dbReference type="SignaLink" id="P01599"/>
<dbReference type="Pharos" id="P01599">
    <property type="development level" value="Tdark"/>
</dbReference>
<dbReference type="PRO" id="PR:P01599"/>
<dbReference type="Proteomes" id="UP000005640">
    <property type="component" value="Chromosome 2"/>
</dbReference>
<dbReference type="RNAct" id="P01599">
    <property type="molecule type" value="protein"/>
</dbReference>
<dbReference type="Bgee" id="ENSG00000240382">
    <property type="expression patterns" value="Expressed in rectum and 84 other cell types or tissues"/>
</dbReference>
<dbReference type="GO" id="GO:0072562">
    <property type="term" value="C:blood microparticle"/>
    <property type="evidence" value="ECO:0007005"/>
    <property type="project" value="UniProtKB"/>
</dbReference>
<dbReference type="GO" id="GO:0070062">
    <property type="term" value="C:extracellular exosome"/>
    <property type="evidence" value="ECO:0007005"/>
    <property type="project" value="UniProtKB"/>
</dbReference>
<dbReference type="GO" id="GO:0005576">
    <property type="term" value="C:extracellular region"/>
    <property type="evidence" value="ECO:0000304"/>
    <property type="project" value="Reactome"/>
</dbReference>
<dbReference type="GO" id="GO:0019814">
    <property type="term" value="C:immunoglobulin complex"/>
    <property type="evidence" value="ECO:0000318"/>
    <property type="project" value="GO_Central"/>
</dbReference>
<dbReference type="GO" id="GO:0005886">
    <property type="term" value="C:plasma membrane"/>
    <property type="evidence" value="ECO:0000304"/>
    <property type="project" value="Reactome"/>
</dbReference>
<dbReference type="GO" id="GO:0003823">
    <property type="term" value="F:antigen binding"/>
    <property type="evidence" value="ECO:0000303"/>
    <property type="project" value="UniProtKB"/>
</dbReference>
<dbReference type="GO" id="GO:0002250">
    <property type="term" value="P:adaptive immune response"/>
    <property type="evidence" value="ECO:0007669"/>
    <property type="project" value="UniProtKB-KW"/>
</dbReference>
<dbReference type="GO" id="GO:0006955">
    <property type="term" value="P:immune response"/>
    <property type="evidence" value="ECO:0000318"/>
    <property type="project" value="GO_Central"/>
</dbReference>
<dbReference type="CDD" id="cd04980">
    <property type="entry name" value="IgV_L_kappa"/>
    <property type="match status" value="1"/>
</dbReference>
<dbReference type="FunFam" id="2.60.40.10:FF:000212">
    <property type="entry name" value="Immunoglobulin kappa chain variable 12-38"/>
    <property type="match status" value="1"/>
</dbReference>
<dbReference type="Gene3D" id="2.60.40.10">
    <property type="entry name" value="Immunoglobulins"/>
    <property type="match status" value="1"/>
</dbReference>
<dbReference type="InterPro" id="IPR007110">
    <property type="entry name" value="Ig-like_dom"/>
</dbReference>
<dbReference type="InterPro" id="IPR036179">
    <property type="entry name" value="Ig-like_dom_sf"/>
</dbReference>
<dbReference type="InterPro" id="IPR013783">
    <property type="entry name" value="Ig-like_fold"/>
</dbReference>
<dbReference type="InterPro" id="IPR003599">
    <property type="entry name" value="Ig_sub"/>
</dbReference>
<dbReference type="InterPro" id="IPR013106">
    <property type="entry name" value="Ig_V-set"/>
</dbReference>
<dbReference type="InterPro" id="IPR050150">
    <property type="entry name" value="IgV_Light_Chain"/>
</dbReference>
<dbReference type="PANTHER" id="PTHR23267">
    <property type="entry name" value="IMMUNOGLOBULIN LIGHT CHAIN"/>
    <property type="match status" value="1"/>
</dbReference>
<dbReference type="Pfam" id="PF07686">
    <property type="entry name" value="V-set"/>
    <property type="match status" value="1"/>
</dbReference>
<dbReference type="SMART" id="SM00409">
    <property type="entry name" value="IG"/>
    <property type="match status" value="1"/>
</dbReference>
<dbReference type="SMART" id="SM00406">
    <property type="entry name" value="IGv"/>
    <property type="match status" value="1"/>
</dbReference>
<dbReference type="SUPFAM" id="SSF48726">
    <property type="entry name" value="Immunoglobulin"/>
    <property type="match status" value="1"/>
</dbReference>
<dbReference type="PROSITE" id="PS50835">
    <property type="entry name" value="IG_LIKE"/>
    <property type="match status" value="1"/>
</dbReference>
<comment type="function">
    <text evidence="6 7 8 9">V region of the variable domain of immunoglobulin light chains that participates in the antigen recognition (PubMed:24600447). Immunoglobulins, also known as antibodies, are membrane-bound or secreted glycoproteins produced by B lymphocytes. In the recognition phase of humoral immunity, the membrane-bound immunoglobulins serve as receptors which, upon binding of a specific antigen, trigger the clonal expansion and differentiation of B lymphocytes into immunoglobulins-secreting plasma cells. Secreted immunoglobulins mediate the effector phase of humoral immunity, which results in the elimination of bound antigens (PubMed:20176268, PubMed:22158414). The antigen binding site is formed by the variable domain of one heavy chain, together with that of its associated light chain. Thus, each immunoglobulin has two antigen binding sites with remarkable affinity for a particular antigen. The variable domains are assembled by a process called V-(D)-J rearrangement and can then be subjected to somatic hypermutations which, after exposure to antigen and selection, allow affinity maturation for a particular antigen (PubMed:17576170, PubMed:20176268).</text>
</comment>
<comment type="subunit">
    <text evidence="7">Immunoglobulins are composed of two identical heavy chains and two identical light chains; disulfide-linked.</text>
</comment>
<comment type="subcellular location">
    <subcellularLocation>
        <location evidence="7 8">Secreted</location>
    </subcellularLocation>
    <subcellularLocation>
        <location evidence="7 8">Cell membrane</location>
    </subcellularLocation>
</comment>
<comment type="polymorphism">
    <text>There are several alleles. The sequence shown is that of IMGT allele IGKV1-17*01.</text>
</comment>
<comment type="caution">
    <text evidence="11">For an example of a full-length immunoglobulin kappa light chain see AC P0DOX7.</text>
</comment>
<evidence type="ECO:0000250" key="1">
    <source>
        <dbReference type="UniProtKB" id="P01602"/>
    </source>
</evidence>
<evidence type="ECO:0000255" key="2">
    <source>
        <dbReference type="PROSITE-ProRule" id="PRU00114"/>
    </source>
</evidence>
<evidence type="ECO:0000269" key="3">
    <source>
    </source>
</evidence>
<evidence type="ECO:0000269" key="4">
    <source>
    </source>
</evidence>
<evidence type="ECO:0000303" key="5">
    <source>
    </source>
</evidence>
<evidence type="ECO:0000303" key="6">
    <source>
    </source>
</evidence>
<evidence type="ECO:0000303" key="7">
    <source>
    </source>
</evidence>
<evidence type="ECO:0000303" key="8">
    <source>
    </source>
</evidence>
<evidence type="ECO:0000303" key="9">
    <source>
    </source>
</evidence>
<evidence type="ECO:0000303" key="10">
    <source ref="5"/>
</evidence>
<evidence type="ECO:0000305" key="11"/>
<evidence type="ECO:0000305" key="12">
    <source>
    </source>
</evidence>
<evidence type="ECO:0000305" key="13">
    <source>
    </source>
</evidence>
<proteinExistence type="evidence at protein level"/>